<name>RPOC_NITOC</name>
<dbReference type="EC" id="2.7.7.6" evidence="1"/>
<dbReference type="EMBL" id="CP000127">
    <property type="protein sequence ID" value="ABA58788.1"/>
    <property type="molecule type" value="Genomic_DNA"/>
</dbReference>
<dbReference type="RefSeq" id="WP_011330932.1">
    <property type="nucleotide sequence ID" value="NC_007484.1"/>
</dbReference>
<dbReference type="SMR" id="Q3J8Q8"/>
<dbReference type="FunCoup" id="Q3J8Q8">
    <property type="interactions" value="585"/>
</dbReference>
<dbReference type="STRING" id="323261.Noc_2330"/>
<dbReference type="KEGG" id="noc:Noc_2330"/>
<dbReference type="eggNOG" id="COG0086">
    <property type="taxonomic scope" value="Bacteria"/>
</dbReference>
<dbReference type="HOGENOM" id="CLU_000524_3_1_6"/>
<dbReference type="InParanoid" id="Q3J8Q8"/>
<dbReference type="Proteomes" id="UP000006838">
    <property type="component" value="Chromosome"/>
</dbReference>
<dbReference type="GO" id="GO:0000428">
    <property type="term" value="C:DNA-directed RNA polymerase complex"/>
    <property type="evidence" value="ECO:0007669"/>
    <property type="project" value="UniProtKB-KW"/>
</dbReference>
<dbReference type="GO" id="GO:0003677">
    <property type="term" value="F:DNA binding"/>
    <property type="evidence" value="ECO:0007669"/>
    <property type="project" value="UniProtKB-UniRule"/>
</dbReference>
<dbReference type="GO" id="GO:0003899">
    <property type="term" value="F:DNA-directed RNA polymerase activity"/>
    <property type="evidence" value="ECO:0007669"/>
    <property type="project" value="UniProtKB-UniRule"/>
</dbReference>
<dbReference type="GO" id="GO:0000287">
    <property type="term" value="F:magnesium ion binding"/>
    <property type="evidence" value="ECO:0007669"/>
    <property type="project" value="UniProtKB-UniRule"/>
</dbReference>
<dbReference type="GO" id="GO:0008270">
    <property type="term" value="F:zinc ion binding"/>
    <property type="evidence" value="ECO:0007669"/>
    <property type="project" value="UniProtKB-UniRule"/>
</dbReference>
<dbReference type="GO" id="GO:0006351">
    <property type="term" value="P:DNA-templated transcription"/>
    <property type="evidence" value="ECO:0007669"/>
    <property type="project" value="UniProtKB-UniRule"/>
</dbReference>
<dbReference type="CDD" id="cd02655">
    <property type="entry name" value="RNAP_beta'_C"/>
    <property type="match status" value="1"/>
</dbReference>
<dbReference type="CDD" id="cd01609">
    <property type="entry name" value="RNAP_beta'_N"/>
    <property type="match status" value="1"/>
</dbReference>
<dbReference type="FunFam" id="1.10.132.30:FF:000003">
    <property type="entry name" value="DNA-directed RNA polymerase subunit beta"/>
    <property type="match status" value="1"/>
</dbReference>
<dbReference type="FunFam" id="1.10.150.390:FF:000002">
    <property type="entry name" value="DNA-directed RNA polymerase subunit beta"/>
    <property type="match status" value="1"/>
</dbReference>
<dbReference type="FunFam" id="4.10.860.120:FF:000001">
    <property type="entry name" value="DNA-directed RNA polymerase subunit beta"/>
    <property type="match status" value="1"/>
</dbReference>
<dbReference type="Gene3D" id="1.10.132.30">
    <property type="match status" value="1"/>
</dbReference>
<dbReference type="Gene3D" id="1.10.150.390">
    <property type="match status" value="1"/>
</dbReference>
<dbReference type="Gene3D" id="1.10.1790.20">
    <property type="match status" value="1"/>
</dbReference>
<dbReference type="Gene3D" id="1.10.40.90">
    <property type="match status" value="1"/>
</dbReference>
<dbReference type="Gene3D" id="2.40.40.20">
    <property type="match status" value="1"/>
</dbReference>
<dbReference type="Gene3D" id="2.40.50.100">
    <property type="match status" value="3"/>
</dbReference>
<dbReference type="Gene3D" id="4.10.860.120">
    <property type="entry name" value="RNA polymerase II, clamp domain"/>
    <property type="match status" value="1"/>
</dbReference>
<dbReference type="Gene3D" id="1.10.274.100">
    <property type="entry name" value="RNA polymerase Rpb1, domain 3"/>
    <property type="match status" value="1"/>
</dbReference>
<dbReference type="HAMAP" id="MF_01322">
    <property type="entry name" value="RNApol_bact_RpoC"/>
    <property type="match status" value="1"/>
</dbReference>
<dbReference type="InterPro" id="IPR045867">
    <property type="entry name" value="DNA-dir_RpoC_beta_prime"/>
</dbReference>
<dbReference type="InterPro" id="IPR012754">
    <property type="entry name" value="DNA-dir_RpoC_beta_prime_bact"/>
</dbReference>
<dbReference type="InterPro" id="IPR000722">
    <property type="entry name" value="RNA_pol_asu"/>
</dbReference>
<dbReference type="InterPro" id="IPR006592">
    <property type="entry name" value="RNA_pol_N"/>
</dbReference>
<dbReference type="InterPro" id="IPR007080">
    <property type="entry name" value="RNA_pol_Rpb1_1"/>
</dbReference>
<dbReference type="InterPro" id="IPR007066">
    <property type="entry name" value="RNA_pol_Rpb1_3"/>
</dbReference>
<dbReference type="InterPro" id="IPR042102">
    <property type="entry name" value="RNA_pol_Rpb1_3_sf"/>
</dbReference>
<dbReference type="InterPro" id="IPR007083">
    <property type="entry name" value="RNA_pol_Rpb1_4"/>
</dbReference>
<dbReference type="InterPro" id="IPR007081">
    <property type="entry name" value="RNA_pol_Rpb1_5"/>
</dbReference>
<dbReference type="InterPro" id="IPR044893">
    <property type="entry name" value="RNA_pol_Rpb1_clamp_domain"/>
</dbReference>
<dbReference type="InterPro" id="IPR038120">
    <property type="entry name" value="Rpb1_funnel_sf"/>
</dbReference>
<dbReference type="NCBIfam" id="TIGR02386">
    <property type="entry name" value="rpoC_TIGR"/>
    <property type="match status" value="1"/>
</dbReference>
<dbReference type="PANTHER" id="PTHR19376">
    <property type="entry name" value="DNA-DIRECTED RNA POLYMERASE"/>
    <property type="match status" value="1"/>
</dbReference>
<dbReference type="PANTHER" id="PTHR19376:SF54">
    <property type="entry name" value="DNA-DIRECTED RNA POLYMERASE SUBUNIT BETA"/>
    <property type="match status" value="1"/>
</dbReference>
<dbReference type="Pfam" id="PF04997">
    <property type="entry name" value="RNA_pol_Rpb1_1"/>
    <property type="match status" value="1"/>
</dbReference>
<dbReference type="Pfam" id="PF00623">
    <property type="entry name" value="RNA_pol_Rpb1_2"/>
    <property type="match status" value="2"/>
</dbReference>
<dbReference type="Pfam" id="PF04983">
    <property type="entry name" value="RNA_pol_Rpb1_3"/>
    <property type="match status" value="1"/>
</dbReference>
<dbReference type="Pfam" id="PF05000">
    <property type="entry name" value="RNA_pol_Rpb1_4"/>
    <property type="match status" value="1"/>
</dbReference>
<dbReference type="Pfam" id="PF04998">
    <property type="entry name" value="RNA_pol_Rpb1_5"/>
    <property type="match status" value="1"/>
</dbReference>
<dbReference type="SMART" id="SM00663">
    <property type="entry name" value="RPOLA_N"/>
    <property type="match status" value="1"/>
</dbReference>
<dbReference type="SUPFAM" id="SSF64484">
    <property type="entry name" value="beta and beta-prime subunits of DNA dependent RNA-polymerase"/>
    <property type="match status" value="1"/>
</dbReference>
<organism>
    <name type="scientific">Nitrosococcus oceani (strain ATCC 19707 / BCRC 17464 / JCM 30415 / NCIMB 11848 / C-107)</name>
    <dbReference type="NCBI Taxonomy" id="323261"/>
    <lineage>
        <taxon>Bacteria</taxon>
        <taxon>Pseudomonadati</taxon>
        <taxon>Pseudomonadota</taxon>
        <taxon>Gammaproteobacteria</taxon>
        <taxon>Chromatiales</taxon>
        <taxon>Chromatiaceae</taxon>
        <taxon>Nitrosococcus</taxon>
    </lineage>
</organism>
<proteinExistence type="inferred from homology"/>
<keyword id="KW-0240">DNA-directed RNA polymerase</keyword>
<keyword id="KW-0460">Magnesium</keyword>
<keyword id="KW-0479">Metal-binding</keyword>
<keyword id="KW-0548">Nucleotidyltransferase</keyword>
<keyword id="KW-1185">Reference proteome</keyword>
<keyword id="KW-0804">Transcription</keyword>
<keyword id="KW-0808">Transferase</keyword>
<keyword id="KW-0862">Zinc</keyword>
<accession>Q3J8Q8</accession>
<protein>
    <recommendedName>
        <fullName evidence="1">DNA-directed RNA polymerase subunit beta'</fullName>
        <shortName evidence="1">RNAP subunit beta'</shortName>
        <ecNumber evidence="1">2.7.7.6</ecNumber>
    </recommendedName>
    <alternativeName>
        <fullName evidence="1">RNA polymerase subunit beta'</fullName>
    </alternativeName>
    <alternativeName>
        <fullName evidence="1">Transcriptase subunit beta'</fullName>
    </alternativeName>
</protein>
<gene>
    <name evidence="1" type="primary">rpoC</name>
    <name type="ordered locus">Noc_2330</name>
</gene>
<comment type="function">
    <text evidence="1">DNA-dependent RNA polymerase catalyzes the transcription of DNA into RNA using the four ribonucleoside triphosphates as substrates.</text>
</comment>
<comment type="catalytic activity">
    <reaction evidence="1">
        <text>RNA(n) + a ribonucleoside 5'-triphosphate = RNA(n+1) + diphosphate</text>
        <dbReference type="Rhea" id="RHEA:21248"/>
        <dbReference type="Rhea" id="RHEA-COMP:14527"/>
        <dbReference type="Rhea" id="RHEA-COMP:17342"/>
        <dbReference type="ChEBI" id="CHEBI:33019"/>
        <dbReference type="ChEBI" id="CHEBI:61557"/>
        <dbReference type="ChEBI" id="CHEBI:140395"/>
        <dbReference type="EC" id="2.7.7.6"/>
    </reaction>
</comment>
<comment type="cofactor">
    <cofactor evidence="1">
        <name>Mg(2+)</name>
        <dbReference type="ChEBI" id="CHEBI:18420"/>
    </cofactor>
    <text evidence="1">Binds 1 Mg(2+) ion per subunit.</text>
</comment>
<comment type="cofactor">
    <cofactor evidence="1">
        <name>Zn(2+)</name>
        <dbReference type="ChEBI" id="CHEBI:29105"/>
    </cofactor>
    <text evidence="1">Binds 2 Zn(2+) ions per subunit.</text>
</comment>
<comment type="subunit">
    <text evidence="1">The RNAP catalytic core consists of 2 alpha, 1 beta, 1 beta' and 1 omega subunit. When a sigma factor is associated with the core the holoenzyme is formed, which can initiate transcription.</text>
</comment>
<comment type="similarity">
    <text evidence="1">Belongs to the RNA polymerase beta' chain family.</text>
</comment>
<evidence type="ECO:0000255" key="1">
    <source>
        <dbReference type="HAMAP-Rule" id="MF_01322"/>
    </source>
</evidence>
<evidence type="ECO:0000256" key="2">
    <source>
        <dbReference type="SAM" id="MobiDB-lite"/>
    </source>
</evidence>
<reference key="1">
    <citation type="journal article" date="2006" name="Appl. Environ. Microbiol.">
        <title>Complete genome sequence of the marine, chemolithoautotrophic, ammonia-oxidizing bacterium Nitrosococcus oceani ATCC 19707.</title>
        <authorList>
            <person name="Klotz M.G."/>
            <person name="Arp D.J."/>
            <person name="Chain P.S.G."/>
            <person name="El-Sheikh A.F."/>
            <person name="Hauser L.J."/>
            <person name="Hommes N.G."/>
            <person name="Larimer F.W."/>
            <person name="Malfatti S.A."/>
            <person name="Norton J.M."/>
            <person name="Poret-Peterson A.T."/>
            <person name="Vergez L.M."/>
            <person name="Ward B.B."/>
        </authorList>
    </citation>
    <scope>NUCLEOTIDE SEQUENCE [LARGE SCALE GENOMIC DNA]</scope>
    <source>
        <strain>ATCC 19707 / BCRC 17464 / JCM 30415 / NCIMB 11848 / C-107</strain>
    </source>
</reference>
<sequence length="1403" mass="155583">MRDLLNLLKQQNQVEEFDSIRIGLASPDMIRAWSYGEVKKPETINYRTFKPERDGLFCAKIFGPVKDYECLCGKYKRLKHRGVICEKCGVEVTLAKVRRERMGHIELASPVAHIWFLKSLPSRISLLLDMTLRDIERVLYFEASVVIDPGMTPLERGQLLADEAYLQAIEEYGDEFDARMGAEAVQKMLKTLDLKGEAIRLREEITGTNSDTKIKKFSKRLKLIEAFIDSGNRSEWMILEVLPVLPPDLRPLVPLEGGRFATSDLNDLYRRVINRNNRLKRLLDLNAPDIIVRNEKRMLQESVDALLDNGRRGRAITGTNKLPLKSLADMIKGKQGRFRQNLLGKRVDYSGRSVIVVGPTLKLHQCGLPKKMALELFKPFIFGKLERAGLATTIKAAKKLVEREGPEVWDVLEEVIREHPVMLNRAPTLHRLGIQAFEPVLIEGKAIQLHPLVCVAFNADFDGDQMAVHVPLSLEAQLEARALMMSTNNILSPANGEPIIVPTQDVVLGLYYMTCERVNAKGEGMLFADINEVRRAYETSIAELHAKISVRITEIDPSKPEGEGETTRLVNTTVGRALLSELLPPGLPFELANKNMTKKEISRLVNICYRRLGLKTSVVFADRLMYLGFRQATLSGISIGVNDMVVPKEKQAILADAEEEVKEIEDQYASGLVTNGERYNKVVDIWSHTNDQVAKAMMERLGSEEVYDAKGNVVKQQTFNSIYMMADSGARGSAAQIRQLAGMRGLMAKPDGSIIETPITANFREGLDVLQYFISTHGARKGLADTALKTANSGYLTRRLVDVAQDLVVTKDDCGTTRGINITPFVEGGDVVEPLRERVLGRVLALNVYVPGSNEVAIPASTLLDESWVDYLETLGIDAVKVRSPITCETRYGICAACYGRDLGRGYRINIGEAIGVIAAQSIGEPGTQLTMRTFHIGGAASRTVTTDRIEVKYKGNIRLHNVKIVQHDSGKYVAVSRSGEVHIVDEQGRERERYKIPYGAELSAGDGDTVESGQVIATWAPHTHPVITEVAGKVRLQDFLEGSTVERQADEVTGLTSLTVLDPKQRGAAVKELRPMVKLVDETGSDLCLAGTDIPAHYYLPAGAVVSVEDEAMVGVGDVLARLPQESSKTRDITGGLPRVADLFEARKPKDPAVLAEISGTVSFGKETKGKQRLIITGSDGERHEELIPKWRQVNVFEGEHVEKGEAIVDGPPVPHDILRLRGVEELTYYIVNEVQEVYRLQGVKINDKHIEVIICQMLRKVEIIEPGDTSFLKGEQIDKPRLLEENEKMEKEDKLPARFEPVLLGITKASLATESFISAASFQETTRVLTEAAVTGKCDELRGLKENVIVGRLIPAGTGLAYHSERRRKRRMLEQPESLTADTGTSHYGEDEISESGAATA</sequence>
<feature type="chain" id="PRO_0000225557" description="DNA-directed RNA polymerase subunit beta'">
    <location>
        <begin position="1"/>
        <end position="1403"/>
    </location>
</feature>
<feature type="region of interest" description="Disordered" evidence="2">
    <location>
        <begin position="1369"/>
        <end position="1403"/>
    </location>
</feature>
<feature type="compositionally biased region" description="Polar residues" evidence="2">
    <location>
        <begin position="1379"/>
        <end position="1388"/>
    </location>
</feature>
<feature type="binding site" evidence="1">
    <location>
        <position position="70"/>
    </location>
    <ligand>
        <name>Zn(2+)</name>
        <dbReference type="ChEBI" id="CHEBI:29105"/>
        <label>1</label>
    </ligand>
</feature>
<feature type="binding site" evidence="1">
    <location>
        <position position="72"/>
    </location>
    <ligand>
        <name>Zn(2+)</name>
        <dbReference type="ChEBI" id="CHEBI:29105"/>
        <label>1</label>
    </ligand>
</feature>
<feature type="binding site" evidence="1">
    <location>
        <position position="85"/>
    </location>
    <ligand>
        <name>Zn(2+)</name>
        <dbReference type="ChEBI" id="CHEBI:29105"/>
        <label>1</label>
    </ligand>
</feature>
<feature type="binding site" evidence="1">
    <location>
        <position position="88"/>
    </location>
    <ligand>
        <name>Zn(2+)</name>
        <dbReference type="ChEBI" id="CHEBI:29105"/>
        <label>1</label>
    </ligand>
</feature>
<feature type="binding site" evidence="1">
    <location>
        <position position="460"/>
    </location>
    <ligand>
        <name>Mg(2+)</name>
        <dbReference type="ChEBI" id="CHEBI:18420"/>
    </ligand>
</feature>
<feature type="binding site" evidence="1">
    <location>
        <position position="462"/>
    </location>
    <ligand>
        <name>Mg(2+)</name>
        <dbReference type="ChEBI" id="CHEBI:18420"/>
    </ligand>
</feature>
<feature type="binding site" evidence="1">
    <location>
        <position position="464"/>
    </location>
    <ligand>
        <name>Mg(2+)</name>
        <dbReference type="ChEBI" id="CHEBI:18420"/>
    </ligand>
</feature>
<feature type="binding site" evidence="1">
    <location>
        <position position="814"/>
    </location>
    <ligand>
        <name>Zn(2+)</name>
        <dbReference type="ChEBI" id="CHEBI:29105"/>
        <label>2</label>
    </ligand>
</feature>
<feature type="binding site" evidence="1">
    <location>
        <position position="888"/>
    </location>
    <ligand>
        <name>Zn(2+)</name>
        <dbReference type="ChEBI" id="CHEBI:29105"/>
        <label>2</label>
    </ligand>
</feature>
<feature type="binding site" evidence="1">
    <location>
        <position position="895"/>
    </location>
    <ligand>
        <name>Zn(2+)</name>
        <dbReference type="ChEBI" id="CHEBI:29105"/>
        <label>2</label>
    </ligand>
</feature>
<feature type="binding site" evidence="1">
    <location>
        <position position="898"/>
    </location>
    <ligand>
        <name>Zn(2+)</name>
        <dbReference type="ChEBI" id="CHEBI:29105"/>
        <label>2</label>
    </ligand>
</feature>